<name>RGGB_ARATH</name>
<reference key="1">
    <citation type="journal article" date="1998" name="Nature">
        <title>Analysis of 1.9 Mb of contiguous sequence from chromosome 4 of Arabidopsis thaliana.</title>
        <authorList>
            <person name="Bevan M."/>
            <person name="Bancroft I."/>
            <person name="Bent E."/>
            <person name="Love K."/>
            <person name="Goodman H.M."/>
            <person name="Dean C."/>
            <person name="Bergkamp R."/>
            <person name="Dirkse W."/>
            <person name="van Staveren M."/>
            <person name="Stiekema W."/>
            <person name="Drost L."/>
            <person name="Ridley P."/>
            <person name="Hudson S.-A."/>
            <person name="Patel K."/>
            <person name="Murphy G."/>
            <person name="Piffanelli P."/>
            <person name="Wedler H."/>
            <person name="Wedler E."/>
            <person name="Wambutt R."/>
            <person name="Weitzenegger T."/>
            <person name="Pohl T."/>
            <person name="Terryn N."/>
            <person name="Gielen J."/>
            <person name="Villarroel R."/>
            <person name="De Clercq R."/>
            <person name="van Montagu M."/>
            <person name="Lecharny A."/>
            <person name="Aubourg S."/>
            <person name="Gy I."/>
            <person name="Kreis M."/>
            <person name="Lao N."/>
            <person name="Kavanagh T."/>
            <person name="Hempel S."/>
            <person name="Kotter P."/>
            <person name="Entian K.-D."/>
            <person name="Rieger M."/>
            <person name="Schaefer M."/>
            <person name="Funk B."/>
            <person name="Mueller-Auer S."/>
            <person name="Silvey M."/>
            <person name="James R."/>
            <person name="Monfort A."/>
            <person name="Pons A."/>
            <person name="Puigdomenech P."/>
            <person name="Douka A."/>
            <person name="Voukelatou E."/>
            <person name="Milioni D."/>
            <person name="Hatzopoulos P."/>
            <person name="Piravandi E."/>
            <person name="Obermaier B."/>
            <person name="Hilbert H."/>
            <person name="Duesterhoeft A."/>
            <person name="Moores T."/>
            <person name="Jones J.D.G."/>
            <person name="Eneva T."/>
            <person name="Palme K."/>
            <person name="Benes V."/>
            <person name="Rechmann S."/>
            <person name="Ansorge W."/>
            <person name="Cooke R."/>
            <person name="Berger C."/>
            <person name="Delseny M."/>
            <person name="Voet M."/>
            <person name="Volckaert G."/>
            <person name="Mewes H.-W."/>
            <person name="Klosterman S."/>
            <person name="Schueller C."/>
            <person name="Chalwatzis N."/>
        </authorList>
    </citation>
    <scope>NUCLEOTIDE SEQUENCE [LARGE SCALE GENOMIC DNA]</scope>
    <source>
        <strain>cv. Columbia</strain>
    </source>
</reference>
<reference key="2">
    <citation type="journal article" date="1999" name="Nature">
        <title>Sequence and analysis of chromosome 4 of the plant Arabidopsis thaliana.</title>
        <authorList>
            <person name="Mayer K.F.X."/>
            <person name="Schueller C."/>
            <person name="Wambutt R."/>
            <person name="Murphy G."/>
            <person name="Volckaert G."/>
            <person name="Pohl T."/>
            <person name="Duesterhoeft A."/>
            <person name="Stiekema W."/>
            <person name="Entian K.-D."/>
            <person name="Terryn N."/>
            <person name="Harris B."/>
            <person name="Ansorge W."/>
            <person name="Brandt P."/>
            <person name="Grivell L.A."/>
            <person name="Rieger M."/>
            <person name="Weichselgartner M."/>
            <person name="de Simone V."/>
            <person name="Obermaier B."/>
            <person name="Mache R."/>
            <person name="Mueller M."/>
            <person name="Kreis M."/>
            <person name="Delseny M."/>
            <person name="Puigdomenech P."/>
            <person name="Watson M."/>
            <person name="Schmidtheini T."/>
            <person name="Reichert B."/>
            <person name="Portetelle D."/>
            <person name="Perez-Alonso M."/>
            <person name="Boutry M."/>
            <person name="Bancroft I."/>
            <person name="Vos P."/>
            <person name="Hoheisel J."/>
            <person name="Zimmermann W."/>
            <person name="Wedler H."/>
            <person name="Ridley P."/>
            <person name="Langham S.-A."/>
            <person name="McCullagh B."/>
            <person name="Bilham L."/>
            <person name="Robben J."/>
            <person name="van der Schueren J."/>
            <person name="Grymonprez B."/>
            <person name="Chuang Y.-J."/>
            <person name="Vandenbussche F."/>
            <person name="Braeken M."/>
            <person name="Weltjens I."/>
            <person name="Voet M."/>
            <person name="Bastiaens I."/>
            <person name="Aert R."/>
            <person name="Defoor E."/>
            <person name="Weitzenegger T."/>
            <person name="Bothe G."/>
            <person name="Ramsperger U."/>
            <person name="Hilbert H."/>
            <person name="Braun M."/>
            <person name="Holzer E."/>
            <person name="Brandt A."/>
            <person name="Peters S."/>
            <person name="van Staveren M."/>
            <person name="Dirkse W."/>
            <person name="Mooijman P."/>
            <person name="Klein Lankhorst R."/>
            <person name="Rose M."/>
            <person name="Hauf J."/>
            <person name="Koetter P."/>
            <person name="Berneiser S."/>
            <person name="Hempel S."/>
            <person name="Feldpausch M."/>
            <person name="Lamberth S."/>
            <person name="Van den Daele H."/>
            <person name="De Keyser A."/>
            <person name="Buysshaert C."/>
            <person name="Gielen J."/>
            <person name="Villarroel R."/>
            <person name="De Clercq R."/>
            <person name="van Montagu M."/>
            <person name="Rogers J."/>
            <person name="Cronin A."/>
            <person name="Quail M.A."/>
            <person name="Bray-Allen S."/>
            <person name="Clark L."/>
            <person name="Doggett J."/>
            <person name="Hall S."/>
            <person name="Kay M."/>
            <person name="Lennard N."/>
            <person name="McLay K."/>
            <person name="Mayes R."/>
            <person name="Pettett A."/>
            <person name="Rajandream M.A."/>
            <person name="Lyne M."/>
            <person name="Benes V."/>
            <person name="Rechmann S."/>
            <person name="Borkova D."/>
            <person name="Bloecker H."/>
            <person name="Scharfe M."/>
            <person name="Grimm M."/>
            <person name="Loehnert T.-H."/>
            <person name="Dose S."/>
            <person name="de Haan M."/>
            <person name="Maarse A.C."/>
            <person name="Schaefer M."/>
            <person name="Mueller-Auer S."/>
            <person name="Gabel C."/>
            <person name="Fuchs M."/>
            <person name="Fartmann B."/>
            <person name="Granderath K."/>
            <person name="Dauner D."/>
            <person name="Herzl A."/>
            <person name="Neumann S."/>
            <person name="Argiriou A."/>
            <person name="Vitale D."/>
            <person name="Liguori R."/>
            <person name="Piravandi E."/>
            <person name="Massenet O."/>
            <person name="Quigley F."/>
            <person name="Clabauld G."/>
            <person name="Muendlein A."/>
            <person name="Felber R."/>
            <person name="Schnabl S."/>
            <person name="Hiller R."/>
            <person name="Schmidt W."/>
            <person name="Lecharny A."/>
            <person name="Aubourg S."/>
            <person name="Chefdor F."/>
            <person name="Cooke R."/>
            <person name="Berger C."/>
            <person name="Monfort A."/>
            <person name="Casacuberta E."/>
            <person name="Gibbons T."/>
            <person name="Weber N."/>
            <person name="Vandenbol M."/>
            <person name="Bargues M."/>
            <person name="Terol J."/>
            <person name="Torres A."/>
            <person name="Perez-Perez A."/>
            <person name="Purnelle B."/>
            <person name="Bent E."/>
            <person name="Johnson S."/>
            <person name="Tacon D."/>
            <person name="Jesse T."/>
            <person name="Heijnen L."/>
            <person name="Schwarz S."/>
            <person name="Scholler P."/>
            <person name="Heber S."/>
            <person name="Francs P."/>
            <person name="Bielke C."/>
            <person name="Frishman D."/>
            <person name="Haase D."/>
            <person name="Lemcke K."/>
            <person name="Mewes H.-W."/>
            <person name="Stocker S."/>
            <person name="Zaccaria P."/>
            <person name="Bevan M."/>
            <person name="Wilson R.K."/>
            <person name="de la Bastide M."/>
            <person name="Habermann K."/>
            <person name="Parnell L."/>
            <person name="Dedhia N."/>
            <person name="Gnoj L."/>
            <person name="Schutz K."/>
            <person name="Huang E."/>
            <person name="Spiegel L."/>
            <person name="Sekhon M."/>
            <person name="Murray J."/>
            <person name="Sheet P."/>
            <person name="Cordes M."/>
            <person name="Abu-Threideh J."/>
            <person name="Stoneking T."/>
            <person name="Kalicki J."/>
            <person name="Graves T."/>
            <person name="Harmon G."/>
            <person name="Edwards J."/>
            <person name="Latreille P."/>
            <person name="Courtney L."/>
            <person name="Cloud J."/>
            <person name="Abbott A."/>
            <person name="Scott K."/>
            <person name="Johnson D."/>
            <person name="Minx P."/>
            <person name="Bentley D."/>
            <person name="Fulton B."/>
            <person name="Miller N."/>
            <person name="Greco T."/>
            <person name="Kemp K."/>
            <person name="Kramer J."/>
            <person name="Fulton L."/>
            <person name="Mardis E."/>
            <person name="Dante M."/>
            <person name="Pepin K."/>
            <person name="Hillier L.W."/>
            <person name="Nelson J."/>
            <person name="Spieth J."/>
            <person name="Ryan E."/>
            <person name="Andrews S."/>
            <person name="Geisel C."/>
            <person name="Layman D."/>
            <person name="Du H."/>
            <person name="Ali J."/>
            <person name="Berghoff A."/>
            <person name="Jones K."/>
            <person name="Drone K."/>
            <person name="Cotton M."/>
            <person name="Joshu C."/>
            <person name="Antonoiu B."/>
            <person name="Zidanic M."/>
            <person name="Strong C."/>
            <person name="Sun H."/>
            <person name="Lamar B."/>
            <person name="Yordan C."/>
            <person name="Ma P."/>
            <person name="Zhong J."/>
            <person name="Preston R."/>
            <person name="Vil D."/>
            <person name="Shekher M."/>
            <person name="Matero A."/>
            <person name="Shah R."/>
            <person name="Swaby I.K."/>
            <person name="O'Shaughnessy A."/>
            <person name="Rodriguez M."/>
            <person name="Hoffman J."/>
            <person name="Till S."/>
            <person name="Granat S."/>
            <person name="Shohdy N."/>
            <person name="Hasegawa A."/>
            <person name="Hameed A."/>
            <person name="Lodhi M."/>
            <person name="Johnson A."/>
            <person name="Chen E."/>
            <person name="Marra M.A."/>
            <person name="Martienssen R."/>
            <person name="McCombie W.R."/>
        </authorList>
    </citation>
    <scope>NUCLEOTIDE SEQUENCE [LARGE SCALE GENOMIC DNA]</scope>
    <source>
        <strain>cv. Columbia</strain>
    </source>
</reference>
<reference key="3">
    <citation type="journal article" date="2017" name="Plant J.">
        <title>Araport11: a complete reannotation of the Arabidopsis thaliana reference genome.</title>
        <authorList>
            <person name="Cheng C.Y."/>
            <person name="Krishnakumar V."/>
            <person name="Chan A.P."/>
            <person name="Thibaud-Nissen F."/>
            <person name="Schobel S."/>
            <person name="Town C.D."/>
        </authorList>
    </citation>
    <scope>GENOME REANNOTATION</scope>
    <source>
        <strain>cv. Columbia</strain>
    </source>
</reference>
<reference key="4">
    <citation type="journal article" date="2003" name="Science">
        <title>Empirical analysis of transcriptional activity in the Arabidopsis genome.</title>
        <authorList>
            <person name="Yamada K."/>
            <person name="Lim J."/>
            <person name="Dale J.M."/>
            <person name="Chen H."/>
            <person name="Shinn P."/>
            <person name="Palm C.J."/>
            <person name="Southwick A.M."/>
            <person name="Wu H.C."/>
            <person name="Kim C.J."/>
            <person name="Nguyen M."/>
            <person name="Pham P.K."/>
            <person name="Cheuk R.F."/>
            <person name="Karlin-Newmann G."/>
            <person name="Liu S.X."/>
            <person name="Lam B."/>
            <person name="Sakano H."/>
            <person name="Wu T."/>
            <person name="Yu G."/>
            <person name="Miranda M."/>
            <person name="Quach H.L."/>
            <person name="Tripp M."/>
            <person name="Chang C.H."/>
            <person name="Lee J.M."/>
            <person name="Toriumi M.J."/>
            <person name="Chan M.M."/>
            <person name="Tang C.C."/>
            <person name="Onodera C.S."/>
            <person name="Deng J.M."/>
            <person name="Akiyama K."/>
            <person name="Ansari Y."/>
            <person name="Arakawa T."/>
            <person name="Banh J."/>
            <person name="Banno F."/>
            <person name="Bowser L."/>
            <person name="Brooks S.Y."/>
            <person name="Carninci P."/>
            <person name="Chao Q."/>
            <person name="Choy N."/>
            <person name="Enju A."/>
            <person name="Goldsmith A.D."/>
            <person name="Gurjal M."/>
            <person name="Hansen N.F."/>
            <person name="Hayashizaki Y."/>
            <person name="Johnson-Hopson C."/>
            <person name="Hsuan V.W."/>
            <person name="Iida K."/>
            <person name="Karnes M."/>
            <person name="Khan S."/>
            <person name="Koesema E."/>
            <person name="Ishida J."/>
            <person name="Jiang P.X."/>
            <person name="Jones T."/>
            <person name="Kawai J."/>
            <person name="Kamiya A."/>
            <person name="Meyers C."/>
            <person name="Nakajima M."/>
            <person name="Narusaka M."/>
            <person name="Seki M."/>
            <person name="Sakurai T."/>
            <person name="Satou M."/>
            <person name="Tamse R."/>
            <person name="Vaysberg M."/>
            <person name="Wallender E.K."/>
            <person name="Wong C."/>
            <person name="Yamamura Y."/>
            <person name="Yuan S."/>
            <person name="Shinozaki K."/>
            <person name="Davis R.W."/>
            <person name="Theologis A."/>
            <person name="Ecker J.R."/>
        </authorList>
    </citation>
    <scope>NUCLEOTIDE SEQUENCE [LARGE SCALE MRNA]</scope>
    <source>
        <strain>cv. Columbia</strain>
    </source>
</reference>
<reference key="5">
    <citation type="submission" date="2002-03" db="EMBL/GenBank/DDBJ databases">
        <title>Full-length cDNA from Arabidopsis thaliana.</title>
        <authorList>
            <person name="Brover V.V."/>
            <person name="Troukhan M.E."/>
            <person name="Alexandrov N.A."/>
            <person name="Lu Y.-P."/>
            <person name="Flavell R.B."/>
            <person name="Feldmann K.A."/>
        </authorList>
    </citation>
    <scope>NUCLEOTIDE SEQUENCE [LARGE SCALE MRNA]</scope>
</reference>
<reference key="6">
    <citation type="journal article" date="2002" name="Plant Mol. Biol.">
        <title>Molecular characterization of nucleus-localized RNA-binding proteins from higher plants.</title>
        <authorList>
            <person name="Landsberger M."/>
            <person name="Lorkovic Z.J."/>
            <person name="Oelmuller R."/>
        </authorList>
    </citation>
    <scope>GENE FAMILY</scope>
    <source>
        <strain>cv. Columbia</strain>
    </source>
</reference>
<reference key="7">
    <citation type="journal article" date="2007" name="Plant Cell">
        <title>Proteome analysis of Arabidopsis leaf peroxisomes reveals novel targeting peptides, metabolic pathways, and defense mechanisms.</title>
        <authorList>
            <person name="Reumann S."/>
            <person name="Babujee L."/>
            <person name="Ma C."/>
            <person name="Wienkoop S."/>
            <person name="Siemsen T."/>
            <person name="Antonicelli G.E."/>
            <person name="Rasche N."/>
            <person name="Lueder F."/>
            <person name="Weckwerth W."/>
            <person name="Jahn O."/>
        </authorList>
    </citation>
    <scope>IDENTIFICATION BY MASS SPECTROMETRY</scope>
</reference>
<reference key="8">
    <citation type="journal article" date="2008" name="J. Proteome Res.">
        <title>Site-specific phosphorylation profiling of Arabidopsis proteins by mass spectrometry and peptide chip analysis.</title>
        <authorList>
            <person name="de la Fuente van Bentem S."/>
            <person name="Anrather D."/>
            <person name="Dohnal I."/>
            <person name="Roitinger E."/>
            <person name="Csaszar E."/>
            <person name="Joore J."/>
            <person name="Buijnink J."/>
            <person name="Carreri A."/>
            <person name="Forzani C."/>
            <person name="Lorkovic Z.J."/>
            <person name="Barta A."/>
            <person name="Lecourieux D."/>
            <person name="Verhounig A."/>
            <person name="Jonak C."/>
            <person name="Hirt H."/>
        </authorList>
    </citation>
    <scope>PHOSPHORYLATION [LARGE SCALE ANALYSIS] AT SER-258</scope>
    <scope>IDENTIFICATION BY MASS SPECTROMETRY [LARGE SCALE ANALYSIS]</scope>
    <source>
        <tissue>Root</tissue>
    </source>
</reference>
<accession>O23593</accession>
<accession>Q8LB56</accession>
<proteinExistence type="evidence at protein level"/>
<evidence type="ECO:0000250" key="1">
    <source>
        <dbReference type="UniProtKB" id="O23523"/>
    </source>
</evidence>
<evidence type="ECO:0000250" key="2">
    <source>
        <dbReference type="UniProtKB" id="Q5XJA5"/>
    </source>
</evidence>
<evidence type="ECO:0000250" key="3">
    <source>
        <dbReference type="UniProtKB" id="Q9SQ56"/>
    </source>
</evidence>
<evidence type="ECO:0000255" key="4">
    <source>
        <dbReference type="PROSITE-ProRule" id="PRU01013"/>
    </source>
</evidence>
<evidence type="ECO:0000256" key="5">
    <source>
        <dbReference type="SAM" id="MobiDB-lite"/>
    </source>
</evidence>
<evidence type="ECO:0000303" key="6">
    <source>
    </source>
</evidence>
<evidence type="ECO:0000305" key="7"/>
<evidence type="ECO:0000312" key="8">
    <source>
        <dbReference type="Araport" id="AT4G17520"/>
    </source>
</evidence>
<evidence type="ECO:0000312" key="9">
    <source>
        <dbReference type="EMBL" id="CAB10532.1"/>
    </source>
</evidence>
<evidence type="ECO:0000312" key="10">
    <source>
        <dbReference type="EMBL" id="CAB78755.1"/>
    </source>
</evidence>
<evidence type="ECO:0007744" key="11">
    <source>
    </source>
</evidence>
<gene>
    <name evidence="6" type="primary">RGGB</name>
    <name evidence="8" type="ordered locus">At4g17520</name>
    <name evidence="9" type="ORF">dl4795w</name>
    <name evidence="10" type="ORF">FCAALL.142</name>
</gene>
<keyword id="KW-0007">Acetylation</keyword>
<keyword id="KW-0963">Cytoplasm</keyword>
<keyword id="KW-0539">Nucleus</keyword>
<keyword id="KW-0597">Phosphoprotein</keyword>
<keyword id="KW-1185">Reference proteome</keyword>
<keyword id="KW-0694">RNA-binding</keyword>
<keyword id="KW-0810">Translation regulation</keyword>
<sequence length="360" mass="38905">MASVNPFDLLDDDAEDPSQIVASKPLKVVAPVQTAKSGKMPTKPPPPSQAVREARNAPGGGRGAGRGGSYGRGGRGGNNRDSRNNDGPANENGYGGGYRRSEEGDGARRGGPVGGYRGDRRGSYSNGGDSGDSERPRKNYDRHSRTAYGNEDKRDGAGRANWGTTQDDITPVTEESTAVVDKNLTVEKQDGEGEATDAKNETPAEKAEEKPEDKEMTLEEYEKVLEEKKKALQATKVEERKVDTKAFEAMQQLSSKKSNNDEVFIKLGTEKDKRITEREEKTRKSLSINEFLKPADGKSYYRPRGGYQGGREGRGPREGNQRDGGRNLREGGRNQRDGGAAAQAPTPAIGDSAQFPTLGK</sequence>
<comment type="function">
    <text evidence="2 3">Ribosome-binding protein that acts as a regulator of mRNA translation by promoting ribosome inactivation (By similarity). Binds RNA (By similarity).</text>
</comment>
<comment type="subcellular location">
    <subcellularLocation>
        <location evidence="3">Nucleus</location>
    </subcellularLocation>
    <subcellularLocation>
        <location evidence="1">Cytoplasm</location>
        <location evidence="1">Perinuclear region</location>
    </subcellularLocation>
</comment>
<comment type="similarity">
    <text evidence="7">Belongs to the SERBP1-HABP4 family.</text>
</comment>
<feature type="initiator methionine" description="Removed" evidence="1">
    <location>
        <position position="1"/>
    </location>
</feature>
<feature type="chain" id="PRO_0000438317" description="RGG repeats nuclear RNA binding protein B">
    <location>
        <begin position="2"/>
        <end position="360"/>
    </location>
</feature>
<feature type="domain" description="FF" evidence="4">
    <location>
        <begin position="223"/>
        <end position="288"/>
    </location>
</feature>
<feature type="region of interest" description="Disordered" evidence="5">
    <location>
        <begin position="1"/>
        <end position="216"/>
    </location>
</feature>
<feature type="region of interest" description="Disordered" evidence="5">
    <location>
        <begin position="250"/>
        <end position="360"/>
    </location>
</feature>
<feature type="compositionally biased region" description="Gly residues" evidence="5">
    <location>
        <begin position="58"/>
        <end position="77"/>
    </location>
</feature>
<feature type="compositionally biased region" description="Basic and acidic residues" evidence="5">
    <location>
        <begin position="99"/>
        <end position="108"/>
    </location>
</feature>
<feature type="compositionally biased region" description="Basic and acidic residues" evidence="5">
    <location>
        <begin position="132"/>
        <end position="157"/>
    </location>
</feature>
<feature type="compositionally biased region" description="Polar residues" evidence="5">
    <location>
        <begin position="162"/>
        <end position="176"/>
    </location>
</feature>
<feature type="compositionally biased region" description="Basic and acidic residues" evidence="5">
    <location>
        <begin position="184"/>
        <end position="216"/>
    </location>
</feature>
<feature type="compositionally biased region" description="Basic and acidic residues" evidence="5">
    <location>
        <begin position="258"/>
        <end position="283"/>
    </location>
</feature>
<feature type="compositionally biased region" description="Basic and acidic residues" evidence="5">
    <location>
        <begin position="311"/>
        <end position="336"/>
    </location>
</feature>
<feature type="modified residue" description="N-acetylalanine" evidence="1">
    <location>
        <position position="2"/>
    </location>
</feature>
<feature type="modified residue" description="Phosphoserine" evidence="11">
    <location>
        <position position="258"/>
    </location>
</feature>
<feature type="sequence conflict" description="In Ref. 5; AAM64962." evidence="7" ref="5">
    <original>D</original>
    <variation>E</variation>
    <location>
        <position position="152"/>
    </location>
</feature>
<feature type="sequence conflict" description="In Ref. 5; AAM64962." evidence="7" ref="5">
    <original>T</original>
    <variation>P</variation>
    <location>
        <position position="165"/>
    </location>
</feature>
<feature type="sequence conflict" description="In Ref. 5; AAM64962." evidence="7" ref="5">
    <original>L</original>
    <variation>Q</variation>
    <location>
        <position position="328"/>
    </location>
</feature>
<protein>
    <recommendedName>
        <fullName evidence="6">RGG repeats nuclear RNA binding protein B</fullName>
    </recommendedName>
</protein>
<organism>
    <name type="scientific">Arabidopsis thaliana</name>
    <name type="common">Mouse-ear cress</name>
    <dbReference type="NCBI Taxonomy" id="3702"/>
    <lineage>
        <taxon>Eukaryota</taxon>
        <taxon>Viridiplantae</taxon>
        <taxon>Streptophyta</taxon>
        <taxon>Embryophyta</taxon>
        <taxon>Tracheophyta</taxon>
        <taxon>Spermatophyta</taxon>
        <taxon>Magnoliopsida</taxon>
        <taxon>eudicotyledons</taxon>
        <taxon>Gunneridae</taxon>
        <taxon>Pentapetalae</taxon>
        <taxon>rosids</taxon>
        <taxon>malvids</taxon>
        <taxon>Brassicales</taxon>
        <taxon>Brassicaceae</taxon>
        <taxon>Camelineae</taxon>
        <taxon>Arabidopsis</taxon>
    </lineage>
</organism>
<dbReference type="EMBL" id="Z97343">
    <property type="protein sequence ID" value="CAB10532.1"/>
    <property type="molecule type" value="Genomic_DNA"/>
</dbReference>
<dbReference type="EMBL" id="AL161546">
    <property type="protein sequence ID" value="CAB78755.1"/>
    <property type="molecule type" value="Genomic_DNA"/>
</dbReference>
<dbReference type="EMBL" id="CP002687">
    <property type="protein sequence ID" value="AEE83906.1"/>
    <property type="molecule type" value="Genomic_DNA"/>
</dbReference>
<dbReference type="EMBL" id="AY057494">
    <property type="protein sequence ID" value="AAL09735.1"/>
    <property type="molecule type" value="mRNA"/>
</dbReference>
<dbReference type="EMBL" id="AY081262">
    <property type="protein sequence ID" value="AAL91151.1"/>
    <property type="molecule type" value="mRNA"/>
</dbReference>
<dbReference type="EMBL" id="BT001153">
    <property type="protein sequence ID" value="AAN65040.1"/>
    <property type="molecule type" value="mRNA"/>
</dbReference>
<dbReference type="EMBL" id="AY087413">
    <property type="protein sequence ID" value="AAM64962.1"/>
    <property type="molecule type" value="mRNA"/>
</dbReference>
<dbReference type="PIR" id="G71444">
    <property type="entry name" value="G71444"/>
</dbReference>
<dbReference type="RefSeq" id="NP_193485.1">
    <property type="nucleotide sequence ID" value="NM_117858.3"/>
</dbReference>
<dbReference type="FunCoup" id="O23593">
    <property type="interactions" value="489"/>
</dbReference>
<dbReference type="STRING" id="3702.O23593"/>
<dbReference type="GlyGen" id="O23593">
    <property type="glycosylation" value="1 site"/>
</dbReference>
<dbReference type="iPTMnet" id="O23593"/>
<dbReference type="MetOSite" id="O23593"/>
<dbReference type="PaxDb" id="3702-AT4G17520.1"/>
<dbReference type="ProteomicsDB" id="236243"/>
<dbReference type="EnsemblPlants" id="AT4G17520.1">
    <property type="protein sequence ID" value="AT4G17520.1"/>
    <property type="gene ID" value="AT4G17520"/>
</dbReference>
<dbReference type="GeneID" id="827467"/>
<dbReference type="Gramene" id="AT4G17520.1">
    <property type="protein sequence ID" value="AT4G17520.1"/>
    <property type="gene ID" value="AT4G17520"/>
</dbReference>
<dbReference type="KEGG" id="ath:AT4G17520"/>
<dbReference type="Araport" id="AT4G17520"/>
<dbReference type="TAIR" id="AT4G17520">
    <property type="gene designation" value="HLN"/>
</dbReference>
<dbReference type="eggNOG" id="KOG2945">
    <property type="taxonomic scope" value="Eukaryota"/>
</dbReference>
<dbReference type="HOGENOM" id="CLU_033492_0_0_1"/>
<dbReference type="InParanoid" id="O23593"/>
<dbReference type="OMA" id="GPRNENG"/>
<dbReference type="PhylomeDB" id="O23593"/>
<dbReference type="CD-CODE" id="4299E36E">
    <property type="entry name" value="Nucleolus"/>
</dbReference>
<dbReference type="PRO" id="PR:O23593"/>
<dbReference type="Proteomes" id="UP000006548">
    <property type="component" value="Chromosome 4"/>
</dbReference>
<dbReference type="ExpressionAtlas" id="O23593">
    <property type="expression patterns" value="baseline and differential"/>
</dbReference>
<dbReference type="GO" id="GO:0005829">
    <property type="term" value="C:cytosol"/>
    <property type="evidence" value="ECO:0007005"/>
    <property type="project" value="TAIR"/>
</dbReference>
<dbReference type="GO" id="GO:0005634">
    <property type="term" value="C:nucleus"/>
    <property type="evidence" value="ECO:0007669"/>
    <property type="project" value="UniProtKB-SubCell"/>
</dbReference>
<dbReference type="GO" id="GO:0048471">
    <property type="term" value="C:perinuclear region of cytoplasm"/>
    <property type="evidence" value="ECO:0007669"/>
    <property type="project" value="UniProtKB-SubCell"/>
</dbReference>
<dbReference type="GO" id="GO:0005777">
    <property type="term" value="C:peroxisome"/>
    <property type="evidence" value="ECO:0007005"/>
    <property type="project" value="TAIR"/>
</dbReference>
<dbReference type="GO" id="GO:0003729">
    <property type="term" value="F:mRNA binding"/>
    <property type="evidence" value="ECO:0000314"/>
    <property type="project" value="TAIR"/>
</dbReference>
<dbReference type="GO" id="GO:0006417">
    <property type="term" value="P:regulation of translation"/>
    <property type="evidence" value="ECO:0007669"/>
    <property type="project" value="UniProtKB-KW"/>
</dbReference>
<dbReference type="Gene3D" id="6.10.140.1040">
    <property type="match status" value="1"/>
</dbReference>
<dbReference type="InterPro" id="IPR039764">
    <property type="entry name" value="HABP4/SERBP1-like"/>
</dbReference>
<dbReference type="InterPro" id="IPR006861">
    <property type="entry name" value="HABP4_PAIRBP1-bd"/>
</dbReference>
<dbReference type="InterPro" id="IPR019084">
    <property type="entry name" value="STM1-like_N"/>
</dbReference>
<dbReference type="PANTHER" id="PTHR12299">
    <property type="entry name" value="HYALURONIC ACID-BINDING PROTEIN 4"/>
    <property type="match status" value="1"/>
</dbReference>
<dbReference type="PANTHER" id="PTHR12299:SF50">
    <property type="entry name" value="RGG REPEATS NUCLEAR RNA BINDING PROTEIN B"/>
    <property type="match status" value="1"/>
</dbReference>
<dbReference type="Pfam" id="PF04774">
    <property type="entry name" value="HABP4_PAI-RBP1"/>
    <property type="match status" value="1"/>
</dbReference>
<dbReference type="Pfam" id="PF09598">
    <property type="entry name" value="Stm1_N"/>
    <property type="match status" value="1"/>
</dbReference>
<dbReference type="SMART" id="SM01233">
    <property type="entry name" value="HABP4_PAI-RBP1"/>
    <property type="match status" value="1"/>
</dbReference>